<gene>
    <name evidence="1" type="primary">serS</name>
    <name type="ordered locus">CCA_00897</name>
</gene>
<feature type="chain" id="PRO_0000122028" description="Serine--tRNA ligase">
    <location>
        <begin position="1"/>
        <end position="426"/>
    </location>
</feature>
<feature type="binding site" evidence="1">
    <location>
        <begin position="231"/>
        <end position="233"/>
    </location>
    <ligand>
        <name>L-serine</name>
        <dbReference type="ChEBI" id="CHEBI:33384"/>
    </ligand>
</feature>
<feature type="binding site" evidence="1">
    <location>
        <begin position="262"/>
        <end position="264"/>
    </location>
    <ligand>
        <name>ATP</name>
        <dbReference type="ChEBI" id="CHEBI:30616"/>
    </ligand>
</feature>
<feature type="binding site" evidence="1">
    <location>
        <position position="278"/>
    </location>
    <ligand>
        <name>ATP</name>
        <dbReference type="ChEBI" id="CHEBI:30616"/>
    </ligand>
</feature>
<feature type="binding site" evidence="1">
    <location>
        <position position="285"/>
    </location>
    <ligand>
        <name>L-serine</name>
        <dbReference type="ChEBI" id="CHEBI:33384"/>
    </ligand>
</feature>
<feature type="binding site" evidence="1">
    <location>
        <begin position="349"/>
        <end position="352"/>
    </location>
    <ligand>
        <name>ATP</name>
        <dbReference type="ChEBI" id="CHEBI:30616"/>
    </ligand>
</feature>
<feature type="binding site" evidence="1">
    <location>
        <position position="384"/>
    </location>
    <ligand>
        <name>L-serine</name>
        <dbReference type="ChEBI" id="CHEBI:33384"/>
    </ligand>
</feature>
<organism>
    <name type="scientific">Chlamydia caviae (strain ATCC VR-813 / DSM 19441 / 03DC25 / GPIC)</name>
    <name type="common">Chlamydophila caviae</name>
    <dbReference type="NCBI Taxonomy" id="227941"/>
    <lineage>
        <taxon>Bacteria</taxon>
        <taxon>Pseudomonadati</taxon>
        <taxon>Chlamydiota</taxon>
        <taxon>Chlamydiia</taxon>
        <taxon>Chlamydiales</taxon>
        <taxon>Chlamydiaceae</taxon>
        <taxon>Chlamydia/Chlamydophila group</taxon>
        <taxon>Chlamydia</taxon>
    </lineage>
</organism>
<reference key="1">
    <citation type="journal article" date="2003" name="Nucleic Acids Res.">
        <title>Genome sequence of Chlamydophila caviae (Chlamydia psittaci GPIC): examining the role of niche-specific genes in the evolution of the Chlamydiaceae.</title>
        <authorList>
            <person name="Read T.D."/>
            <person name="Myers G.S.A."/>
            <person name="Brunham R.C."/>
            <person name="Nelson W.C."/>
            <person name="Paulsen I.T."/>
            <person name="Heidelberg J.F."/>
            <person name="Holtzapple E.K."/>
            <person name="Khouri H.M."/>
            <person name="Federova N.B."/>
            <person name="Carty H.A."/>
            <person name="Umayam L.A."/>
            <person name="Haft D.H."/>
            <person name="Peterson J.D."/>
            <person name="Beanan M.J."/>
            <person name="White O."/>
            <person name="Salzberg S.L."/>
            <person name="Hsia R.-C."/>
            <person name="McClarty G."/>
            <person name="Rank R.G."/>
            <person name="Bavoil P.M."/>
            <person name="Fraser C.M."/>
        </authorList>
    </citation>
    <scope>NUCLEOTIDE SEQUENCE [LARGE SCALE GENOMIC DNA]</scope>
    <source>
        <strain>ATCC VR-813 / DSM 19441 / 03DC25 / GPIC</strain>
    </source>
</reference>
<accession>Q821P2</accession>
<comment type="function">
    <text evidence="1">Catalyzes the attachment of serine to tRNA(Ser). Is also able to aminoacylate tRNA(Sec) with serine, to form the misacylated tRNA L-seryl-tRNA(Sec), which will be further converted into selenocysteinyl-tRNA(Sec).</text>
</comment>
<comment type="catalytic activity">
    <reaction evidence="1">
        <text>tRNA(Ser) + L-serine + ATP = L-seryl-tRNA(Ser) + AMP + diphosphate + H(+)</text>
        <dbReference type="Rhea" id="RHEA:12292"/>
        <dbReference type="Rhea" id="RHEA-COMP:9669"/>
        <dbReference type="Rhea" id="RHEA-COMP:9703"/>
        <dbReference type="ChEBI" id="CHEBI:15378"/>
        <dbReference type="ChEBI" id="CHEBI:30616"/>
        <dbReference type="ChEBI" id="CHEBI:33019"/>
        <dbReference type="ChEBI" id="CHEBI:33384"/>
        <dbReference type="ChEBI" id="CHEBI:78442"/>
        <dbReference type="ChEBI" id="CHEBI:78533"/>
        <dbReference type="ChEBI" id="CHEBI:456215"/>
        <dbReference type="EC" id="6.1.1.11"/>
    </reaction>
</comment>
<comment type="catalytic activity">
    <reaction evidence="1">
        <text>tRNA(Sec) + L-serine + ATP = L-seryl-tRNA(Sec) + AMP + diphosphate + H(+)</text>
        <dbReference type="Rhea" id="RHEA:42580"/>
        <dbReference type="Rhea" id="RHEA-COMP:9742"/>
        <dbReference type="Rhea" id="RHEA-COMP:10128"/>
        <dbReference type="ChEBI" id="CHEBI:15378"/>
        <dbReference type="ChEBI" id="CHEBI:30616"/>
        <dbReference type="ChEBI" id="CHEBI:33019"/>
        <dbReference type="ChEBI" id="CHEBI:33384"/>
        <dbReference type="ChEBI" id="CHEBI:78442"/>
        <dbReference type="ChEBI" id="CHEBI:78533"/>
        <dbReference type="ChEBI" id="CHEBI:456215"/>
        <dbReference type="EC" id="6.1.1.11"/>
    </reaction>
</comment>
<comment type="pathway">
    <text evidence="1">Aminoacyl-tRNA biosynthesis; selenocysteinyl-tRNA(Sec) biosynthesis; L-seryl-tRNA(Sec) from L-serine and tRNA(Sec): step 1/1.</text>
</comment>
<comment type="subunit">
    <text evidence="1">Homodimer. The tRNA molecule binds across the dimer.</text>
</comment>
<comment type="subcellular location">
    <subcellularLocation>
        <location evidence="1">Cytoplasm</location>
    </subcellularLocation>
</comment>
<comment type="domain">
    <text evidence="1">Consists of two distinct domains, a catalytic core and a N-terminal extension that is involved in tRNA binding.</text>
</comment>
<comment type="similarity">
    <text evidence="1">Belongs to the class-II aminoacyl-tRNA synthetase family. Type-1 seryl-tRNA synthetase subfamily.</text>
</comment>
<sequence length="426" mass="48332">MLDIKLIRKAPEECEIRLRKKDPNISLLPILDLDKEVRRLKTDSESLQSQRKLLSTQIHKAKAQGEDASNMISEVERISQDLEKLEASLEEKNATLQDLLVRLPNYPEEDVPVCPDKSGNQVIKSVGALPTFSFTPKHHVELNQKLQILDFKLPAKTSGSGWPAYKNQGVMLEWALLTYLLNKQREHGFQLWLPPLLVKREILFGSGQIPKFDGQYYCVEDGDQSLYLIPTAEVVLNGFHSQEIFNEKDLPIYYAACTPCFRREAGAAGANERGLVRVHQFNKVEMFAFTTPEQADQAYEKMLAVVEDILTELKLPYRLSLLSTGDMSFTASKTIDAEVWLPGQQSYYEVSSISQCTDFQSRRSETRYKDSQGKMHFIHTLNGSGLATPRLFVAILENNQQKDGSVVIPEVLRPYLGNQEVLLPQE</sequence>
<dbReference type="EC" id="6.1.1.11" evidence="1"/>
<dbReference type="EMBL" id="AE015925">
    <property type="protein sequence ID" value="AAP05637.1"/>
    <property type="molecule type" value="Genomic_DNA"/>
</dbReference>
<dbReference type="RefSeq" id="WP_011006851.1">
    <property type="nucleotide sequence ID" value="NC_003361.3"/>
</dbReference>
<dbReference type="SMR" id="Q821P2"/>
<dbReference type="STRING" id="227941.CCA_00897"/>
<dbReference type="KEGG" id="cca:CCA_00897"/>
<dbReference type="eggNOG" id="COG0172">
    <property type="taxonomic scope" value="Bacteria"/>
</dbReference>
<dbReference type="HOGENOM" id="CLU_023797_1_1_0"/>
<dbReference type="OrthoDB" id="9804647at2"/>
<dbReference type="UniPathway" id="UPA00906">
    <property type="reaction ID" value="UER00895"/>
</dbReference>
<dbReference type="Proteomes" id="UP000002193">
    <property type="component" value="Chromosome"/>
</dbReference>
<dbReference type="GO" id="GO:0005737">
    <property type="term" value="C:cytoplasm"/>
    <property type="evidence" value="ECO:0007669"/>
    <property type="project" value="UniProtKB-SubCell"/>
</dbReference>
<dbReference type="GO" id="GO:0005524">
    <property type="term" value="F:ATP binding"/>
    <property type="evidence" value="ECO:0007669"/>
    <property type="project" value="UniProtKB-UniRule"/>
</dbReference>
<dbReference type="GO" id="GO:0004828">
    <property type="term" value="F:serine-tRNA ligase activity"/>
    <property type="evidence" value="ECO:0007669"/>
    <property type="project" value="UniProtKB-UniRule"/>
</dbReference>
<dbReference type="GO" id="GO:0016260">
    <property type="term" value="P:selenocysteine biosynthetic process"/>
    <property type="evidence" value="ECO:0007669"/>
    <property type="project" value="UniProtKB-UniRule"/>
</dbReference>
<dbReference type="GO" id="GO:0006434">
    <property type="term" value="P:seryl-tRNA aminoacylation"/>
    <property type="evidence" value="ECO:0007669"/>
    <property type="project" value="UniProtKB-UniRule"/>
</dbReference>
<dbReference type="CDD" id="cd00770">
    <property type="entry name" value="SerRS_core"/>
    <property type="match status" value="1"/>
</dbReference>
<dbReference type="Gene3D" id="3.30.930.10">
    <property type="entry name" value="Bira Bifunctional Protein, Domain 2"/>
    <property type="match status" value="1"/>
</dbReference>
<dbReference type="Gene3D" id="1.10.287.40">
    <property type="entry name" value="Serine-tRNA synthetase, tRNA binding domain"/>
    <property type="match status" value="1"/>
</dbReference>
<dbReference type="HAMAP" id="MF_00176">
    <property type="entry name" value="Ser_tRNA_synth_type1"/>
    <property type="match status" value="1"/>
</dbReference>
<dbReference type="InterPro" id="IPR002314">
    <property type="entry name" value="aa-tRNA-synt_IIb"/>
</dbReference>
<dbReference type="InterPro" id="IPR006195">
    <property type="entry name" value="aa-tRNA-synth_II"/>
</dbReference>
<dbReference type="InterPro" id="IPR045864">
    <property type="entry name" value="aa-tRNA-synth_II/BPL/LPL"/>
</dbReference>
<dbReference type="InterPro" id="IPR002317">
    <property type="entry name" value="Ser-tRNA-ligase_type_1"/>
</dbReference>
<dbReference type="InterPro" id="IPR015866">
    <property type="entry name" value="Ser-tRNA-synth_1_N"/>
</dbReference>
<dbReference type="InterPro" id="IPR042103">
    <property type="entry name" value="SerRS_1_N_sf"/>
</dbReference>
<dbReference type="InterPro" id="IPR033729">
    <property type="entry name" value="SerRS_core"/>
</dbReference>
<dbReference type="InterPro" id="IPR010978">
    <property type="entry name" value="tRNA-bd_arm"/>
</dbReference>
<dbReference type="NCBIfam" id="TIGR00414">
    <property type="entry name" value="serS"/>
    <property type="match status" value="1"/>
</dbReference>
<dbReference type="PANTHER" id="PTHR43697:SF1">
    <property type="entry name" value="SERINE--TRNA LIGASE"/>
    <property type="match status" value="1"/>
</dbReference>
<dbReference type="PANTHER" id="PTHR43697">
    <property type="entry name" value="SERYL-TRNA SYNTHETASE"/>
    <property type="match status" value="1"/>
</dbReference>
<dbReference type="Pfam" id="PF02403">
    <property type="entry name" value="Seryl_tRNA_N"/>
    <property type="match status" value="1"/>
</dbReference>
<dbReference type="Pfam" id="PF00587">
    <property type="entry name" value="tRNA-synt_2b"/>
    <property type="match status" value="1"/>
</dbReference>
<dbReference type="PIRSF" id="PIRSF001529">
    <property type="entry name" value="Ser-tRNA-synth_IIa"/>
    <property type="match status" value="1"/>
</dbReference>
<dbReference type="PRINTS" id="PR00981">
    <property type="entry name" value="TRNASYNTHSER"/>
</dbReference>
<dbReference type="SUPFAM" id="SSF55681">
    <property type="entry name" value="Class II aaRS and biotin synthetases"/>
    <property type="match status" value="1"/>
</dbReference>
<dbReference type="SUPFAM" id="SSF46589">
    <property type="entry name" value="tRNA-binding arm"/>
    <property type="match status" value="1"/>
</dbReference>
<dbReference type="PROSITE" id="PS50862">
    <property type="entry name" value="AA_TRNA_LIGASE_II"/>
    <property type="match status" value="1"/>
</dbReference>
<protein>
    <recommendedName>
        <fullName evidence="1">Serine--tRNA ligase</fullName>
        <ecNumber evidence="1">6.1.1.11</ecNumber>
    </recommendedName>
    <alternativeName>
        <fullName evidence="1">Seryl-tRNA synthetase</fullName>
        <shortName evidence="1">SerRS</shortName>
    </alternativeName>
    <alternativeName>
        <fullName evidence="1">Seryl-tRNA(Ser/Sec) synthetase</fullName>
    </alternativeName>
</protein>
<proteinExistence type="inferred from homology"/>
<evidence type="ECO:0000255" key="1">
    <source>
        <dbReference type="HAMAP-Rule" id="MF_00176"/>
    </source>
</evidence>
<name>SYS_CHLCV</name>
<keyword id="KW-0030">Aminoacyl-tRNA synthetase</keyword>
<keyword id="KW-0067">ATP-binding</keyword>
<keyword id="KW-0963">Cytoplasm</keyword>
<keyword id="KW-0436">Ligase</keyword>
<keyword id="KW-0547">Nucleotide-binding</keyword>
<keyword id="KW-0648">Protein biosynthesis</keyword>